<comment type="function">
    <text evidence="1">Involved in peptide bond synthesis. Stimulates efficient translation and peptide-bond synthesis on native or reconstituted 70S ribosomes in vitro. Probably functions indirectly by altering the affinity of the ribosome for aminoacyl-tRNA, thus increasing their reactivity as acceptors for peptidyl transferase.</text>
</comment>
<comment type="pathway">
    <text evidence="1">Protein biosynthesis; polypeptide chain elongation.</text>
</comment>
<comment type="subcellular location">
    <subcellularLocation>
        <location evidence="1">Cytoplasm</location>
    </subcellularLocation>
</comment>
<comment type="similarity">
    <text evidence="1">Belongs to the elongation factor P family.</text>
</comment>
<evidence type="ECO:0000255" key="1">
    <source>
        <dbReference type="HAMAP-Rule" id="MF_00141"/>
    </source>
</evidence>
<sequence length="188" mass="20726">MRVIASSIRKGNVLEQDGKLYVVLSAENIHPGKGTPVSQIEMRRISDGVKISERYKTTDHVEKVTIEERNYSFLYEDGEGFHFMEPESYDQVQVTKDVVGSAAPYLQEGMVVKLSMHDTTAVAITLPQRATLEVVDTEPVTKGQTASSSYKPAVLSNGVRTQVPPHIGTGTRIVVLTEDGSYVERAKD</sequence>
<keyword id="KW-0963">Cytoplasm</keyword>
<keyword id="KW-0251">Elongation factor</keyword>
<keyword id="KW-0648">Protein biosynthesis</keyword>
<organism>
    <name type="scientific">Rhodopseudomonas palustris (strain TIE-1)</name>
    <dbReference type="NCBI Taxonomy" id="395960"/>
    <lineage>
        <taxon>Bacteria</taxon>
        <taxon>Pseudomonadati</taxon>
        <taxon>Pseudomonadota</taxon>
        <taxon>Alphaproteobacteria</taxon>
        <taxon>Hyphomicrobiales</taxon>
        <taxon>Nitrobacteraceae</taxon>
        <taxon>Rhodopseudomonas</taxon>
    </lineage>
</organism>
<protein>
    <recommendedName>
        <fullName evidence="1">Elongation factor P</fullName>
        <shortName evidence="1">EF-P</shortName>
    </recommendedName>
</protein>
<name>EFP_RHOPT</name>
<feature type="chain" id="PRO_1000096196" description="Elongation factor P">
    <location>
        <begin position="1"/>
        <end position="188"/>
    </location>
</feature>
<dbReference type="EMBL" id="CP001096">
    <property type="protein sequence ID" value="ACF01301.1"/>
    <property type="molecule type" value="Genomic_DNA"/>
</dbReference>
<dbReference type="RefSeq" id="WP_012495983.1">
    <property type="nucleotide sequence ID" value="NC_011004.1"/>
</dbReference>
<dbReference type="SMR" id="B3QHV4"/>
<dbReference type="KEGG" id="rpt:Rpal_2792"/>
<dbReference type="HOGENOM" id="CLU_074944_1_1_5"/>
<dbReference type="OrthoDB" id="9801844at2"/>
<dbReference type="UniPathway" id="UPA00345"/>
<dbReference type="Proteomes" id="UP000001725">
    <property type="component" value="Chromosome"/>
</dbReference>
<dbReference type="GO" id="GO:0005737">
    <property type="term" value="C:cytoplasm"/>
    <property type="evidence" value="ECO:0007669"/>
    <property type="project" value="UniProtKB-SubCell"/>
</dbReference>
<dbReference type="GO" id="GO:0003746">
    <property type="term" value="F:translation elongation factor activity"/>
    <property type="evidence" value="ECO:0007669"/>
    <property type="project" value="UniProtKB-UniRule"/>
</dbReference>
<dbReference type="GO" id="GO:0043043">
    <property type="term" value="P:peptide biosynthetic process"/>
    <property type="evidence" value="ECO:0007669"/>
    <property type="project" value="InterPro"/>
</dbReference>
<dbReference type="CDD" id="cd04470">
    <property type="entry name" value="S1_EF-P_repeat_1"/>
    <property type="match status" value="1"/>
</dbReference>
<dbReference type="CDD" id="cd05794">
    <property type="entry name" value="S1_EF-P_repeat_2"/>
    <property type="match status" value="1"/>
</dbReference>
<dbReference type="FunFam" id="2.40.50.140:FF:000004">
    <property type="entry name" value="Elongation factor P"/>
    <property type="match status" value="1"/>
</dbReference>
<dbReference type="FunFam" id="2.40.50.140:FF:000009">
    <property type="entry name" value="Elongation factor P"/>
    <property type="match status" value="1"/>
</dbReference>
<dbReference type="Gene3D" id="2.30.30.30">
    <property type="match status" value="1"/>
</dbReference>
<dbReference type="Gene3D" id="2.40.50.140">
    <property type="entry name" value="Nucleic acid-binding proteins"/>
    <property type="match status" value="2"/>
</dbReference>
<dbReference type="HAMAP" id="MF_00141">
    <property type="entry name" value="EF_P"/>
    <property type="match status" value="1"/>
</dbReference>
<dbReference type="InterPro" id="IPR015365">
    <property type="entry name" value="Elong-fact-P_C"/>
</dbReference>
<dbReference type="InterPro" id="IPR012340">
    <property type="entry name" value="NA-bd_OB-fold"/>
</dbReference>
<dbReference type="InterPro" id="IPR014722">
    <property type="entry name" value="Rib_uL2_dom2"/>
</dbReference>
<dbReference type="InterPro" id="IPR020599">
    <property type="entry name" value="Transl_elong_fac_P/YeiP"/>
</dbReference>
<dbReference type="InterPro" id="IPR013185">
    <property type="entry name" value="Transl_elong_KOW-like"/>
</dbReference>
<dbReference type="InterPro" id="IPR001059">
    <property type="entry name" value="Transl_elong_P/YeiP_cen"/>
</dbReference>
<dbReference type="InterPro" id="IPR013852">
    <property type="entry name" value="Transl_elong_P/YeiP_CS"/>
</dbReference>
<dbReference type="InterPro" id="IPR011768">
    <property type="entry name" value="Transl_elongation_fac_P"/>
</dbReference>
<dbReference type="InterPro" id="IPR008991">
    <property type="entry name" value="Translation_prot_SH3-like_sf"/>
</dbReference>
<dbReference type="NCBIfam" id="TIGR00038">
    <property type="entry name" value="efp"/>
    <property type="match status" value="1"/>
</dbReference>
<dbReference type="NCBIfam" id="NF001810">
    <property type="entry name" value="PRK00529.1"/>
    <property type="match status" value="1"/>
</dbReference>
<dbReference type="PANTHER" id="PTHR30053">
    <property type="entry name" value="ELONGATION FACTOR P"/>
    <property type="match status" value="1"/>
</dbReference>
<dbReference type="PANTHER" id="PTHR30053:SF14">
    <property type="entry name" value="TRANSLATION ELONGATION FACTOR KOW-LIKE DOMAIN-CONTAINING PROTEIN"/>
    <property type="match status" value="1"/>
</dbReference>
<dbReference type="Pfam" id="PF01132">
    <property type="entry name" value="EFP"/>
    <property type="match status" value="1"/>
</dbReference>
<dbReference type="Pfam" id="PF08207">
    <property type="entry name" value="EFP_N"/>
    <property type="match status" value="1"/>
</dbReference>
<dbReference type="Pfam" id="PF09285">
    <property type="entry name" value="Elong-fact-P_C"/>
    <property type="match status" value="1"/>
</dbReference>
<dbReference type="PIRSF" id="PIRSF005901">
    <property type="entry name" value="EF-P"/>
    <property type="match status" value="1"/>
</dbReference>
<dbReference type="SMART" id="SM01185">
    <property type="entry name" value="EFP"/>
    <property type="match status" value="1"/>
</dbReference>
<dbReference type="SMART" id="SM00841">
    <property type="entry name" value="Elong-fact-P_C"/>
    <property type="match status" value="1"/>
</dbReference>
<dbReference type="SUPFAM" id="SSF50249">
    <property type="entry name" value="Nucleic acid-binding proteins"/>
    <property type="match status" value="2"/>
</dbReference>
<dbReference type="SUPFAM" id="SSF50104">
    <property type="entry name" value="Translation proteins SH3-like domain"/>
    <property type="match status" value="1"/>
</dbReference>
<dbReference type="PROSITE" id="PS01275">
    <property type="entry name" value="EFP"/>
    <property type="match status" value="1"/>
</dbReference>
<gene>
    <name evidence="1" type="primary">efp</name>
    <name type="ordered locus">Rpal_2792</name>
</gene>
<reference key="1">
    <citation type="submission" date="2008-05" db="EMBL/GenBank/DDBJ databases">
        <title>Complete sequence of Rhodopseudomonas palustris TIE-1.</title>
        <authorList>
            <consortium name="US DOE Joint Genome Institute"/>
            <person name="Lucas S."/>
            <person name="Copeland A."/>
            <person name="Lapidus A."/>
            <person name="Glavina del Rio T."/>
            <person name="Dalin E."/>
            <person name="Tice H."/>
            <person name="Pitluck S."/>
            <person name="Chain P."/>
            <person name="Malfatti S."/>
            <person name="Shin M."/>
            <person name="Vergez L."/>
            <person name="Lang D."/>
            <person name="Schmutz J."/>
            <person name="Larimer F."/>
            <person name="Land M."/>
            <person name="Hauser L."/>
            <person name="Kyrpides N."/>
            <person name="Mikhailova N."/>
            <person name="Emerson D."/>
            <person name="Newman D.K."/>
            <person name="Roden E."/>
            <person name="Richardson P."/>
        </authorList>
    </citation>
    <scope>NUCLEOTIDE SEQUENCE [LARGE SCALE GENOMIC DNA]</scope>
    <source>
        <strain>TIE-1</strain>
    </source>
</reference>
<proteinExistence type="inferred from homology"/>
<accession>B3QHV4</accession>